<sequence>MARRMSMYSMASEAMGGPQAPQQMSTTTLLNAIHNIYLSSQPYQIDAGTSLVVNTWLTAAQAGATVDATLAARAWEHARRRAEDGCVVLGSLHQATPSLLVPFLNTFPFAIPASIYKSLEAVQPFLRCVTPYNASAPRQIALGVTLTLSLGGSVTGASLALSQGGIDTENGLLNVPAEAGYRAFDVFYYLLTSASTPAEREFLGLKAPSAYALLARSGTYEPPSYLITADDGAAADDFRQALKEIGIKGSVHRNFISTLAGLLKLGNTLDYDADSDDFEEICEDVSGLLGMEPEVLMQQLSTEDRRTLVAGLYEALVDWVISKANAAIAAQMLRIRDGDESVDGRGVRTPNENEDGDTVSITVVEVPEPALGRALAMRTIFDDTLGINAEMIEDGVEIHPASSSVVREMQQAVADVAPDLGIMTGPQGRDRQHDIEKREVILEKAAYASEEDSFLKKLLFPVEGQGINLGRTGRFDLPGLLSSSRAWFHLALHPTDDSPANLATLPAITSAWSAGTISRQLRSWRLPEWANRRNRSLDYTADFDVDEFVGRYGALGCKDGKDGIETWMLERGWSNGEVFIGKERIWVREGPWWEAESMLDIKPAHSLQSIGQNPFTSGFDTSYSANPPNGSGFFPAPAMDNSMNGSNDQLMHTRNFSQGNMSQATFNQHPHLNPQSAPSIAPSAMRNAQPATGDYGLGNKGDTYKGQVFYNDDGDFTGKLDGDLAKDKKIETKPLTFGRRAWVAFVWALTFWIPSPLLKFVGRMRRPDVRMAWREKLVLFFIILLLNGLIIFWIIGFGKLLCPNANKAWNVKEVAGHAEDEDAFWVAIFGKVYDITDFWRQQHSDTSIKTTKTNMLPLAGMVMDNYFMPPLNRACRGLGIKETVQLTFNETITNPLAQHVSGFYTRDRTSALHNADWFWTTFQPKIKEYYHGDLVWKEGTVKSQGSGSEQHPWVMYGNQIYDLTDYLHTLDVNDNFDTYKFLNEDMVNLWKNSPGTNIKKDLDLLISNAKNETVAANLKNSWQCIQNIAYKGIVDFRDSPRCRVNNWLLLAFAIIICIVTAVKFLAALQFGSKRRPSPQDKFVICQVPVYTEGEDSLRKALDSLTALQYDNKRKLICVICDGVVVGEGNDRPTPKIVLDILGVDPKVDPPALPFKSVGNSAEQLNYGKVYSGLYEFEGNVVPYIVVVKVGKESEQTKSKPGNRGKRDSQILLMSFLNRVHHRAPMSPLELEMFHQVNNIIGVDPELYEYLLMIDADTCVEEDALNRLVAACAHDAKIAGICGETALENDEKTWWTMIQVYEYFISHHLAKAFESLFGSVTCLPGCFTMYRLRSVDKGKPLIISDGVIKDYSVCDVDTLHKKNLLSLGEDRYLTTLMTKYFPEMSYKFIPDAQCKTAAPESWSVLLSQRRRWINSTIHNLVELMQLKELCGFCCFSMRFVVFIDLTGTIILPSTTVYIGYLIYVLATGTGPIPYISLAMIGAVYGHQALIFILKRQWQHIGWMIIYILAFPIYSFILPLYSFWNQDNFSWGNTRIVIGEKGDKQVVAVDDEGFDPRSIPLQRWDDYAMANNLPGRRGGYQEKTDYSYGDNYELDEIKSVYSAGPQGSVLTGMPGRNTYMPPSPAFNNGRTSTMGFQESPMQHRQSMMSMGTGVHDMRSQSPYQDYPGQHPGVANLRGQANLSPAAGGGHSRSGTALGFSSGSRSPMPDAMRSQSSFDFQHGQGGPTDMAIVESIRSVLCEVDLDTVTKKQVRALVEQRLQTELVGERRTFMDRQIDHELENM</sequence>
<organism>
    <name type="scientific">Gibberella zeae (strain ATCC MYA-4620 / CBS 123657 / FGSC 9075 / NRRL 31084 / PH-1)</name>
    <name type="common">Wheat head blight fungus</name>
    <name type="synonym">Fusarium graminearum</name>
    <dbReference type="NCBI Taxonomy" id="229533"/>
    <lineage>
        <taxon>Eukaryota</taxon>
        <taxon>Fungi</taxon>
        <taxon>Dikarya</taxon>
        <taxon>Ascomycota</taxon>
        <taxon>Pezizomycotina</taxon>
        <taxon>Sordariomycetes</taxon>
        <taxon>Hypocreomycetidae</taxon>
        <taxon>Hypocreales</taxon>
        <taxon>Nectriaceae</taxon>
        <taxon>Fusarium</taxon>
    </lineage>
</organism>
<accession>A0A1C3YIF8</accession>
<proteinExistence type="evidence at transcript level"/>
<feature type="transmembrane region" description="Helical" evidence="1">
    <location>
        <begin position="741"/>
        <end position="761"/>
    </location>
</feature>
<feature type="transmembrane region" description="Helical" evidence="1">
    <location>
        <begin position="777"/>
        <end position="797"/>
    </location>
</feature>
<feature type="transmembrane region" description="Helical" evidence="1">
    <location>
        <begin position="1048"/>
        <end position="1068"/>
    </location>
</feature>
<feature type="transmembrane region" description="Helical" evidence="1">
    <location>
        <begin position="1444"/>
        <end position="1464"/>
    </location>
</feature>
<feature type="transmembrane region" description="Helical" evidence="1">
    <location>
        <begin position="1471"/>
        <end position="1491"/>
    </location>
</feature>
<feature type="transmembrane region" description="Helical" evidence="1">
    <location>
        <begin position="1499"/>
        <end position="1519"/>
    </location>
</feature>
<feature type="domain" description="DEK-C" evidence="3">
    <location>
        <begin position="1723"/>
        <end position="1779"/>
    </location>
</feature>
<feature type="region of interest" description="Disordered" evidence="4">
    <location>
        <begin position="1677"/>
        <end position="1712"/>
    </location>
</feature>
<feature type="compositionally biased region" description="Polar residues" evidence="4">
    <location>
        <begin position="1690"/>
        <end position="1702"/>
    </location>
</feature>
<feature type="glycosylation site" description="N-linked (GlcNAc...) asparagine" evidence="2">
    <location>
        <position position="133"/>
    </location>
</feature>
<feature type="glycosylation site" description="N-linked (GlcNAc...) asparagine" evidence="2">
    <location>
        <position position="534"/>
    </location>
</feature>
<feature type="glycosylation site" description="N-linked (GlcNAc...) asparagine" evidence="2">
    <location>
        <position position="629"/>
    </location>
</feature>
<feature type="glycosylation site" description="N-linked (GlcNAc...) asparagine" evidence="2">
    <location>
        <position position="644"/>
    </location>
</feature>
<feature type="glycosylation site" description="N-linked (GlcNAc...) asparagine" evidence="2">
    <location>
        <position position="655"/>
    </location>
</feature>
<feature type="glycosylation site" description="N-linked (GlcNAc...) asparagine" evidence="2">
    <location>
        <position position="660"/>
    </location>
</feature>
<feature type="glycosylation site" description="N-linked (GlcNAc...) asparagine" evidence="2">
    <location>
        <position position="889"/>
    </location>
</feature>
<feature type="glycosylation site" description="N-linked (GlcNAc...) asparagine" evidence="2">
    <location>
        <position position="1011"/>
    </location>
</feature>
<feature type="glycosylation site" description="N-linked (GlcNAc...) asparagine" evidence="2">
    <location>
        <position position="1413"/>
    </location>
</feature>
<feature type="glycosylation site" description="N-linked (GlcNAc...) asparagine" evidence="2">
    <location>
        <position position="1526"/>
    </location>
</feature>
<evidence type="ECO:0000255" key="1"/>
<evidence type="ECO:0000255" key="2">
    <source>
        <dbReference type="PROSITE-ProRule" id="PRU00498"/>
    </source>
</evidence>
<evidence type="ECO:0000255" key="3">
    <source>
        <dbReference type="PROSITE-ProRule" id="PRU01342"/>
    </source>
</evidence>
<evidence type="ECO:0000256" key="4">
    <source>
        <dbReference type="SAM" id="MobiDB-lite"/>
    </source>
</evidence>
<evidence type="ECO:0000269" key="5">
    <source>
    </source>
</evidence>
<evidence type="ECO:0000269" key="6">
    <source>
    </source>
</evidence>
<evidence type="ECO:0000269" key="7">
    <source>
    </source>
</evidence>
<evidence type="ECO:0000303" key="8">
    <source>
    </source>
</evidence>
<evidence type="ECO:0000305" key="9"/>
<evidence type="ECO:0000305" key="10">
    <source>
    </source>
</evidence>
<protein>
    <recommendedName>
        <fullName evidence="8">Chitin synthase 7</fullName>
        <ecNumber evidence="10">2.4.1.16</ecNumber>
    </recommendedName>
    <alternativeName>
        <fullName evidence="9">Chitin-UDP acetyl-glucosaminyl transferase 7</fullName>
    </alternativeName>
    <alternativeName>
        <fullName evidence="8">Class-V chitin synthase 7</fullName>
    </alternativeName>
</protein>
<name>CHIS7_GIBZE</name>
<reference key="1">
    <citation type="journal article" date="2007" name="Science">
        <title>The Fusarium graminearum genome reveals a link between localized polymorphism and pathogen specialization.</title>
        <authorList>
            <person name="Cuomo C.A."/>
            <person name="Gueldener U."/>
            <person name="Xu J.-R."/>
            <person name="Trail F."/>
            <person name="Turgeon B.G."/>
            <person name="Di Pietro A."/>
            <person name="Walton J.D."/>
            <person name="Ma L.-J."/>
            <person name="Baker S.E."/>
            <person name="Rep M."/>
            <person name="Adam G."/>
            <person name="Antoniw J."/>
            <person name="Baldwin T."/>
            <person name="Calvo S.E."/>
            <person name="Chang Y.-L."/>
            <person name="DeCaprio D."/>
            <person name="Gale L.R."/>
            <person name="Gnerre S."/>
            <person name="Goswami R.S."/>
            <person name="Hammond-Kosack K."/>
            <person name="Harris L.J."/>
            <person name="Hilburn K."/>
            <person name="Kennell J.C."/>
            <person name="Kroken S."/>
            <person name="Magnuson J.K."/>
            <person name="Mannhaupt G."/>
            <person name="Mauceli E.W."/>
            <person name="Mewes H.-W."/>
            <person name="Mitterbauer R."/>
            <person name="Muehlbauer G."/>
            <person name="Muensterkoetter M."/>
            <person name="Nelson D."/>
            <person name="O'Donnell K."/>
            <person name="Ouellet T."/>
            <person name="Qi W."/>
            <person name="Quesneville H."/>
            <person name="Roncero M.I.G."/>
            <person name="Seong K.-Y."/>
            <person name="Tetko I.V."/>
            <person name="Urban M."/>
            <person name="Waalwijk C."/>
            <person name="Ward T.J."/>
            <person name="Yao J."/>
            <person name="Birren B.W."/>
            <person name="Kistler H.C."/>
        </authorList>
    </citation>
    <scope>NUCLEOTIDE SEQUENCE [LARGE SCALE GENOMIC DNA]</scope>
    <source>
        <strain>ATCC MYA-4620 / CBS 123657 / FGSC 9075 / NRRL 31084 / PH-1</strain>
    </source>
</reference>
<reference key="2">
    <citation type="journal article" date="2010" name="Nature">
        <title>Comparative genomics reveals mobile pathogenicity chromosomes in Fusarium.</title>
        <authorList>
            <person name="Ma L.-J."/>
            <person name="van der Does H.C."/>
            <person name="Borkovich K.A."/>
            <person name="Coleman J.J."/>
            <person name="Daboussi M.-J."/>
            <person name="Di Pietro A."/>
            <person name="Dufresne M."/>
            <person name="Freitag M."/>
            <person name="Grabherr M."/>
            <person name="Henrissat B."/>
            <person name="Houterman P.M."/>
            <person name="Kang S."/>
            <person name="Shim W.-B."/>
            <person name="Woloshuk C."/>
            <person name="Xie X."/>
            <person name="Xu J.-R."/>
            <person name="Antoniw J."/>
            <person name="Baker S.E."/>
            <person name="Bluhm B.H."/>
            <person name="Breakspear A."/>
            <person name="Brown D.W."/>
            <person name="Butchko R.A.E."/>
            <person name="Chapman S."/>
            <person name="Coulson R."/>
            <person name="Coutinho P.M."/>
            <person name="Danchin E.G.J."/>
            <person name="Diener A."/>
            <person name="Gale L.R."/>
            <person name="Gardiner D.M."/>
            <person name="Goff S."/>
            <person name="Hammond-Kosack K.E."/>
            <person name="Hilburn K."/>
            <person name="Hua-Van A."/>
            <person name="Jonkers W."/>
            <person name="Kazan K."/>
            <person name="Kodira C.D."/>
            <person name="Koehrsen M."/>
            <person name="Kumar L."/>
            <person name="Lee Y.-H."/>
            <person name="Li L."/>
            <person name="Manners J.M."/>
            <person name="Miranda-Saavedra D."/>
            <person name="Mukherjee M."/>
            <person name="Park G."/>
            <person name="Park J."/>
            <person name="Park S.-Y."/>
            <person name="Proctor R.H."/>
            <person name="Regev A."/>
            <person name="Ruiz-Roldan M.C."/>
            <person name="Sain D."/>
            <person name="Sakthikumar S."/>
            <person name="Sykes S."/>
            <person name="Schwartz D.C."/>
            <person name="Turgeon B.G."/>
            <person name="Wapinski I."/>
            <person name="Yoder O."/>
            <person name="Young S."/>
            <person name="Zeng Q."/>
            <person name="Zhou S."/>
            <person name="Galagan J."/>
            <person name="Cuomo C.A."/>
            <person name="Kistler H.C."/>
            <person name="Rep M."/>
        </authorList>
    </citation>
    <scope>GENOME REANNOTATION</scope>
    <source>
        <strain>ATCC MYA-4620 / CBS 123657 / FGSC 9075 / NRRL 31084 / PH-1</strain>
    </source>
</reference>
<reference key="3">
    <citation type="journal article" date="2015" name="BMC Genomics">
        <title>The completed genome sequence of the pathogenic ascomycete fungus Fusarium graminearum.</title>
        <authorList>
            <person name="King R."/>
            <person name="Urban M."/>
            <person name="Hammond-Kosack M.C.U."/>
            <person name="Hassani-Pak K."/>
            <person name="Hammond-Kosack K.E."/>
        </authorList>
    </citation>
    <scope>NUCLEOTIDE SEQUENCE [LARGE SCALE GENOMIC DNA]</scope>
    <source>
        <strain>ATCC MYA-4620 / CBS 123657 / FGSC 9075 / NRRL 31084 / PH-1</strain>
    </source>
</reference>
<reference key="4">
    <citation type="journal article" date="2009" name="Curr. Genet.">
        <title>Gibberella zeae chitin synthase genes, GzCHS5 and GzCHS7, are required for hyphal growth, perithecia formation, and pathogenicity.</title>
        <authorList>
            <person name="Kim J.E."/>
            <person name="Lee H.J."/>
            <person name="Lee J."/>
            <person name="Kim K.W."/>
            <person name="Yun S.H."/>
            <person name="Shim W.B."/>
            <person name="Lee Y.W."/>
        </authorList>
    </citation>
    <scope>FUNCTION</scope>
    <scope>DISRUPTION PHENOTYPE</scope>
</reference>
<reference key="5">
    <citation type="journal article" date="2016" name="Sci. Rep.">
        <title>The chitin synthase FgChs2 and other FgChss co-regulate vegetative development and virulence in F. graminearum.</title>
        <authorList>
            <person name="Liu Z."/>
            <person name="Zhang X."/>
            <person name="Liu X."/>
            <person name="Fu C."/>
            <person name="Han X."/>
            <person name="Yin Y."/>
            <person name="Ma Z."/>
        </authorList>
    </citation>
    <scope>FUNCTION</scope>
    <scope>INDUCTION</scope>
</reference>
<reference key="6">
    <citation type="journal article" date="2021" name="Front. Microbiol.">
        <title>Application of Double-Strand RNAs Targeting Chitin Synthase, Glucan Synthase, and Protein Kinase Reduces Fusarium graminearum Spreading in Wheat.</title>
        <authorList>
            <person name="Yang P."/>
            <person name="Yi S.Y."/>
            <person name="Nian J.N."/>
            <person name="Yuan Q.S."/>
            <person name="He W.J."/>
            <person name="Zhang J.B."/>
            <person name="Liao Y.C."/>
        </authorList>
    </citation>
    <scope>FUNCTION</scope>
    <scope>DISRUPTION PHENOTYPE</scope>
</reference>
<gene>
    <name evidence="8" type="primary">CHS7</name>
    <name type="ORF">FGRAMPH1_01T04739</name>
</gene>
<keyword id="KW-1003">Cell membrane</keyword>
<keyword id="KW-0325">Glycoprotein</keyword>
<keyword id="KW-0328">Glycosyltransferase</keyword>
<keyword id="KW-0472">Membrane</keyword>
<keyword id="KW-0505">Motor protein</keyword>
<keyword id="KW-0518">Myosin</keyword>
<keyword id="KW-1185">Reference proteome</keyword>
<keyword id="KW-0808">Transferase</keyword>
<keyword id="KW-0812">Transmembrane</keyword>
<keyword id="KW-1133">Transmembrane helix</keyword>
<keyword id="KW-0843">Virulence</keyword>
<comment type="function">
    <text evidence="5 6 7 10">Polymerizes chitin, a structural polymer of the cell wall and septum, by transferring the sugar moiety of UDP-GlcNAc to the non-reducing end of the growing chitin polymer (Probable). Shows additive effects in septum formation with CHS1, CHS2, CHS3A, CHS4, CHS5 and CHS6 (PubMed:19547974, PubMed:27725723). Indispensable for perithecia formation and regulates conidiation (PubMed:19547974, PubMed:27725723). Plays an important role in the response to cell wall stress (PubMed:27725723). Also required for hyphal growth and pathogenicity (PubMed:19547974, PubMed:34305830).</text>
</comment>
<comment type="catalytic activity">
    <reaction evidence="10">
        <text>[(1-&gt;4)-N-acetyl-beta-D-glucosaminyl](n) + UDP-N-acetyl-alpha-D-glucosamine = [(1-&gt;4)-N-acetyl-beta-D-glucosaminyl](n+1) + UDP + H(+)</text>
        <dbReference type="Rhea" id="RHEA:16637"/>
        <dbReference type="Rhea" id="RHEA-COMP:9593"/>
        <dbReference type="Rhea" id="RHEA-COMP:9595"/>
        <dbReference type="ChEBI" id="CHEBI:15378"/>
        <dbReference type="ChEBI" id="CHEBI:17029"/>
        <dbReference type="ChEBI" id="CHEBI:57705"/>
        <dbReference type="ChEBI" id="CHEBI:58223"/>
        <dbReference type="EC" id="2.4.1.16"/>
    </reaction>
    <physiologicalReaction direction="left-to-right" evidence="10">
        <dbReference type="Rhea" id="RHEA:16638"/>
    </physiologicalReaction>
</comment>
<comment type="subcellular location">
    <subcellularLocation>
        <location evidence="9">Cell membrane</location>
        <topology evidence="1">Multi-pass membrane protein</topology>
    </subcellularLocation>
</comment>
<comment type="induction">
    <text evidence="6">Exhibits higher expression levels in hyphae than in germinating conidia (PubMed:27725723). Expression is increased in the absence of chitin synthase CHS2 (PubMed:27725723).</text>
</comment>
<comment type="disruption phenotype">
    <text evidence="5 7">Reduces mycelia growth and fails to produce perithecia (PubMed:19547974). Shows drastically reduced virulence on barley heads or wheat leaves (PubMed:19547974, PubMed:34305830).</text>
</comment>
<comment type="similarity">
    <text evidence="9">Belongs to the chitin synthase family. Class V subfamily.</text>
</comment>
<dbReference type="EC" id="2.4.1.16" evidence="10"/>
<dbReference type="EMBL" id="HG970332">
    <property type="protein sequence ID" value="SCB64337.1"/>
    <property type="molecule type" value="Genomic_DNA"/>
</dbReference>
<dbReference type="SMR" id="A0A1C3YIF8"/>
<dbReference type="STRING" id="229533.A0A1C3YIF8"/>
<dbReference type="VEuPathDB" id="FungiDB:FGRAMPH1_01G04739"/>
<dbReference type="eggNOG" id="KOG2571">
    <property type="taxonomic scope" value="Eukaryota"/>
</dbReference>
<dbReference type="InParanoid" id="A0A1C3YIF8"/>
<dbReference type="PHI-base" id="PHI:11731"/>
<dbReference type="Proteomes" id="UP000070720">
    <property type="component" value="Chromosome 1"/>
</dbReference>
<dbReference type="GO" id="GO:0030428">
    <property type="term" value="C:cell septum"/>
    <property type="evidence" value="ECO:0007669"/>
    <property type="project" value="TreeGrafter"/>
</dbReference>
<dbReference type="GO" id="GO:0016459">
    <property type="term" value="C:myosin complex"/>
    <property type="evidence" value="ECO:0007669"/>
    <property type="project" value="UniProtKB-KW"/>
</dbReference>
<dbReference type="GO" id="GO:0005886">
    <property type="term" value="C:plasma membrane"/>
    <property type="evidence" value="ECO:0007669"/>
    <property type="project" value="UniProtKB-SubCell"/>
</dbReference>
<dbReference type="GO" id="GO:0005524">
    <property type="term" value="F:ATP binding"/>
    <property type="evidence" value="ECO:0007669"/>
    <property type="project" value="InterPro"/>
</dbReference>
<dbReference type="GO" id="GO:0004100">
    <property type="term" value="F:chitin synthase activity"/>
    <property type="evidence" value="ECO:0007669"/>
    <property type="project" value="UniProtKB-EC"/>
</dbReference>
<dbReference type="GO" id="GO:0003774">
    <property type="term" value="F:cytoskeletal motor activity"/>
    <property type="evidence" value="ECO:0007669"/>
    <property type="project" value="InterPro"/>
</dbReference>
<dbReference type="GO" id="GO:0006031">
    <property type="term" value="P:chitin biosynthetic process"/>
    <property type="evidence" value="ECO:0007669"/>
    <property type="project" value="TreeGrafter"/>
</dbReference>
<dbReference type="GO" id="GO:0031505">
    <property type="term" value="P:fungal-type cell wall organization"/>
    <property type="evidence" value="ECO:0007669"/>
    <property type="project" value="TreeGrafter"/>
</dbReference>
<dbReference type="CDD" id="cd04190">
    <property type="entry name" value="Chitin_synth_C"/>
    <property type="match status" value="1"/>
</dbReference>
<dbReference type="FunFam" id="1.10.10.820:FF:000010">
    <property type="entry name" value="Chitin synthase 6"/>
    <property type="match status" value="1"/>
</dbReference>
<dbReference type="Gene3D" id="1.10.10.820">
    <property type="match status" value="1"/>
</dbReference>
<dbReference type="Gene3D" id="3.10.120.10">
    <property type="entry name" value="Cytochrome b5-like heme/steroid binding domain"/>
    <property type="match status" value="1"/>
</dbReference>
<dbReference type="Gene3D" id="1.10.10.60">
    <property type="entry name" value="Homeodomain-like"/>
    <property type="match status" value="1"/>
</dbReference>
<dbReference type="Gene3D" id="3.40.850.10">
    <property type="entry name" value="Kinesin motor domain"/>
    <property type="match status" value="1"/>
</dbReference>
<dbReference type="Gene3D" id="1.20.120.720">
    <property type="entry name" value="Myosin VI head, motor domain, U50 subdomain"/>
    <property type="match status" value="1"/>
</dbReference>
<dbReference type="Gene3D" id="3.90.550.10">
    <property type="entry name" value="Spore Coat Polysaccharide Biosynthesis Protein SpsA, Chain A"/>
    <property type="match status" value="1"/>
</dbReference>
<dbReference type="InterPro" id="IPR004835">
    <property type="entry name" value="Chitin_synth"/>
</dbReference>
<dbReference type="InterPro" id="IPR036400">
    <property type="entry name" value="Cyt_B5-like_heme/steroid_sf"/>
</dbReference>
<dbReference type="InterPro" id="IPR014876">
    <property type="entry name" value="DEK_C"/>
</dbReference>
<dbReference type="InterPro" id="IPR036961">
    <property type="entry name" value="Kinesin_motor_dom_sf"/>
</dbReference>
<dbReference type="InterPro" id="IPR001609">
    <property type="entry name" value="Myosin_head_motor_dom-like"/>
</dbReference>
<dbReference type="InterPro" id="IPR029044">
    <property type="entry name" value="Nucleotide-diphossugar_trans"/>
</dbReference>
<dbReference type="InterPro" id="IPR027417">
    <property type="entry name" value="P-loop_NTPase"/>
</dbReference>
<dbReference type="PANTHER" id="PTHR22914">
    <property type="entry name" value="CHITIN SYNTHASE"/>
    <property type="match status" value="1"/>
</dbReference>
<dbReference type="PANTHER" id="PTHR22914:SF13">
    <property type="entry name" value="CHITIN SYNTHASE"/>
    <property type="match status" value="1"/>
</dbReference>
<dbReference type="Pfam" id="PF03142">
    <property type="entry name" value="Chitin_synth_2"/>
    <property type="match status" value="1"/>
</dbReference>
<dbReference type="Pfam" id="PF08766">
    <property type="entry name" value="DEK_C"/>
    <property type="match status" value="1"/>
</dbReference>
<dbReference type="SMART" id="SM00242">
    <property type="entry name" value="MYSc"/>
    <property type="match status" value="1"/>
</dbReference>
<dbReference type="SUPFAM" id="SSF55856">
    <property type="entry name" value="Cytochrome b5-like heme/steroid binding domain"/>
    <property type="match status" value="1"/>
</dbReference>
<dbReference type="SUPFAM" id="SSF109715">
    <property type="entry name" value="DEK C-terminal domain"/>
    <property type="match status" value="1"/>
</dbReference>
<dbReference type="SUPFAM" id="SSF53448">
    <property type="entry name" value="Nucleotide-diphospho-sugar transferases"/>
    <property type="match status" value="1"/>
</dbReference>
<dbReference type="SUPFAM" id="SSF52540">
    <property type="entry name" value="P-loop containing nucleoside triphosphate hydrolases"/>
    <property type="match status" value="1"/>
</dbReference>
<dbReference type="PROSITE" id="PS51998">
    <property type="entry name" value="DEK_C"/>
    <property type="match status" value="1"/>
</dbReference>